<dbReference type="EC" id="5.3.1.9" evidence="1"/>
<dbReference type="EMBL" id="CU468230">
    <property type="protein sequence ID" value="CAO99494.1"/>
    <property type="molecule type" value="Genomic_DNA"/>
</dbReference>
<dbReference type="SMR" id="B0VMS2"/>
<dbReference type="KEGG" id="abm:ABSDF0081"/>
<dbReference type="HOGENOM" id="CLU_017947_3_1_6"/>
<dbReference type="UniPathway" id="UPA00109">
    <property type="reaction ID" value="UER00181"/>
</dbReference>
<dbReference type="UniPathway" id="UPA00138"/>
<dbReference type="Proteomes" id="UP000001741">
    <property type="component" value="Chromosome"/>
</dbReference>
<dbReference type="GO" id="GO:0005829">
    <property type="term" value="C:cytosol"/>
    <property type="evidence" value="ECO:0007669"/>
    <property type="project" value="TreeGrafter"/>
</dbReference>
<dbReference type="GO" id="GO:0097367">
    <property type="term" value="F:carbohydrate derivative binding"/>
    <property type="evidence" value="ECO:0007669"/>
    <property type="project" value="InterPro"/>
</dbReference>
<dbReference type="GO" id="GO:0004347">
    <property type="term" value="F:glucose-6-phosphate isomerase activity"/>
    <property type="evidence" value="ECO:0007669"/>
    <property type="project" value="UniProtKB-UniRule"/>
</dbReference>
<dbReference type="GO" id="GO:0048029">
    <property type="term" value="F:monosaccharide binding"/>
    <property type="evidence" value="ECO:0007669"/>
    <property type="project" value="TreeGrafter"/>
</dbReference>
<dbReference type="GO" id="GO:0006094">
    <property type="term" value="P:gluconeogenesis"/>
    <property type="evidence" value="ECO:0007669"/>
    <property type="project" value="UniProtKB-UniRule"/>
</dbReference>
<dbReference type="GO" id="GO:0051156">
    <property type="term" value="P:glucose 6-phosphate metabolic process"/>
    <property type="evidence" value="ECO:0007669"/>
    <property type="project" value="TreeGrafter"/>
</dbReference>
<dbReference type="GO" id="GO:0006096">
    <property type="term" value="P:glycolytic process"/>
    <property type="evidence" value="ECO:0007669"/>
    <property type="project" value="UniProtKB-UniRule"/>
</dbReference>
<dbReference type="CDD" id="cd05015">
    <property type="entry name" value="SIS_PGI_1"/>
    <property type="match status" value="1"/>
</dbReference>
<dbReference type="CDD" id="cd05016">
    <property type="entry name" value="SIS_PGI_2"/>
    <property type="match status" value="1"/>
</dbReference>
<dbReference type="Gene3D" id="1.10.1390.10">
    <property type="match status" value="1"/>
</dbReference>
<dbReference type="Gene3D" id="3.40.50.10490">
    <property type="entry name" value="Glucose-6-phosphate isomerase like protein, domain 1"/>
    <property type="match status" value="2"/>
</dbReference>
<dbReference type="HAMAP" id="MF_00473">
    <property type="entry name" value="G6P_isomerase"/>
    <property type="match status" value="1"/>
</dbReference>
<dbReference type="InterPro" id="IPR001672">
    <property type="entry name" value="G6P_Isomerase"/>
</dbReference>
<dbReference type="InterPro" id="IPR023096">
    <property type="entry name" value="G6P_Isomerase_C"/>
</dbReference>
<dbReference type="InterPro" id="IPR018189">
    <property type="entry name" value="Phosphoglucose_isomerase_CS"/>
</dbReference>
<dbReference type="InterPro" id="IPR046348">
    <property type="entry name" value="SIS_dom_sf"/>
</dbReference>
<dbReference type="InterPro" id="IPR035476">
    <property type="entry name" value="SIS_PGI_1"/>
</dbReference>
<dbReference type="InterPro" id="IPR035482">
    <property type="entry name" value="SIS_PGI_2"/>
</dbReference>
<dbReference type="NCBIfam" id="NF001211">
    <property type="entry name" value="PRK00179.1"/>
    <property type="match status" value="1"/>
</dbReference>
<dbReference type="PANTHER" id="PTHR11469">
    <property type="entry name" value="GLUCOSE-6-PHOSPHATE ISOMERASE"/>
    <property type="match status" value="1"/>
</dbReference>
<dbReference type="PANTHER" id="PTHR11469:SF1">
    <property type="entry name" value="GLUCOSE-6-PHOSPHATE ISOMERASE"/>
    <property type="match status" value="1"/>
</dbReference>
<dbReference type="Pfam" id="PF00342">
    <property type="entry name" value="PGI"/>
    <property type="match status" value="1"/>
</dbReference>
<dbReference type="PRINTS" id="PR00662">
    <property type="entry name" value="G6PISOMERASE"/>
</dbReference>
<dbReference type="SUPFAM" id="SSF53697">
    <property type="entry name" value="SIS domain"/>
    <property type="match status" value="1"/>
</dbReference>
<dbReference type="PROSITE" id="PS00765">
    <property type="entry name" value="P_GLUCOSE_ISOMERASE_1"/>
    <property type="match status" value="1"/>
</dbReference>
<dbReference type="PROSITE" id="PS00174">
    <property type="entry name" value="P_GLUCOSE_ISOMERASE_2"/>
    <property type="match status" value="1"/>
</dbReference>
<dbReference type="PROSITE" id="PS51463">
    <property type="entry name" value="P_GLUCOSE_ISOMERASE_3"/>
    <property type="match status" value="1"/>
</dbReference>
<feature type="chain" id="PRO_1000125683" description="Glucose-6-phosphate isomerase">
    <location>
        <begin position="1"/>
        <end position="556"/>
    </location>
</feature>
<feature type="active site" description="Proton donor" evidence="1">
    <location>
        <position position="360"/>
    </location>
</feature>
<feature type="active site" evidence="1">
    <location>
        <position position="391"/>
    </location>
</feature>
<feature type="active site" evidence="1">
    <location>
        <position position="519"/>
    </location>
</feature>
<gene>
    <name evidence="1" type="primary">pgi</name>
    <name type="ordered locus">ABSDF0081</name>
</gene>
<organism>
    <name type="scientific">Acinetobacter baumannii (strain SDF)</name>
    <dbReference type="NCBI Taxonomy" id="509170"/>
    <lineage>
        <taxon>Bacteria</taxon>
        <taxon>Pseudomonadati</taxon>
        <taxon>Pseudomonadota</taxon>
        <taxon>Gammaproteobacteria</taxon>
        <taxon>Moraxellales</taxon>
        <taxon>Moraxellaceae</taxon>
        <taxon>Acinetobacter</taxon>
        <taxon>Acinetobacter calcoaceticus/baumannii complex</taxon>
    </lineage>
</organism>
<comment type="function">
    <text evidence="1">Catalyzes the reversible isomerization of glucose-6-phosphate to fructose-6-phosphate.</text>
</comment>
<comment type="catalytic activity">
    <reaction evidence="1">
        <text>alpha-D-glucose 6-phosphate = beta-D-fructose 6-phosphate</text>
        <dbReference type="Rhea" id="RHEA:11816"/>
        <dbReference type="ChEBI" id="CHEBI:57634"/>
        <dbReference type="ChEBI" id="CHEBI:58225"/>
        <dbReference type="EC" id="5.3.1.9"/>
    </reaction>
</comment>
<comment type="pathway">
    <text evidence="1">Carbohydrate biosynthesis; gluconeogenesis.</text>
</comment>
<comment type="pathway">
    <text evidence="1">Carbohydrate degradation; glycolysis; D-glyceraldehyde 3-phosphate and glycerone phosphate from D-glucose: step 2/4.</text>
</comment>
<comment type="subcellular location">
    <subcellularLocation>
        <location evidence="1">Cytoplasm</location>
    </subcellularLocation>
</comment>
<comment type="similarity">
    <text evidence="1">Belongs to the GPI family.</text>
</comment>
<protein>
    <recommendedName>
        <fullName evidence="1">Glucose-6-phosphate isomerase</fullName>
        <shortName evidence="1">GPI</shortName>
        <ecNumber evidence="1">5.3.1.9</ecNumber>
    </recommendedName>
    <alternativeName>
        <fullName evidence="1">Phosphoglucose isomerase</fullName>
        <shortName evidence="1">PGI</shortName>
    </alternativeName>
    <alternativeName>
        <fullName evidence="1">Phosphohexose isomerase</fullName>
        <shortName evidence="1">PHI</shortName>
    </alternativeName>
</protein>
<proteinExistence type="inferred from homology"/>
<reference key="1">
    <citation type="journal article" date="2008" name="PLoS ONE">
        <title>Comparative analysis of Acinetobacters: three genomes for three lifestyles.</title>
        <authorList>
            <person name="Vallenet D."/>
            <person name="Nordmann P."/>
            <person name="Barbe V."/>
            <person name="Poirel L."/>
            <person name="Mangenot S."/>
            <person name="Bataille E."/>
            <person name="Dossat C."/>
            <person name="Gas S."/>
            <person name="Kreimeyer A."/>
            <person name="Lenoble P."/>
            <person name="Oztas S."/>
            <person name="Poulain J."/>
            <person name="Segurens B."/>
            <person name="Robert C."/>
            <person name="Abergel C."/>
            <person name="Claverie J.-M."/>
            <person name="Raoult D."/>
            <person name="Medigue C."/>
            <person name="Weissenbach J."/>
            <person name="Cruveiller S."/>
        </authorList>
    </citation>
    <scope>NUCLEOTIDE SEQUENCE [LARGE SCALE GENOMIC DNA]</scope>
    <source>
        <strain>SDF</strain>
    </source>
</reference>
<name>G6PI_ACIBS</name>
<keyword id="KW-0963">Cytoplasm</keyword>
<keyword id="KW-0312">Gluconeogenesis</keyword>
<keyword id="KW-0324">Glycolysis</keyword>
<keyword id="KW-0413">Isomerase</keyword>
<evidence type="ECO:0000255" key="1">
    <source>
        <dbReference type="HAMAP-Rule" id="MF_00473"/>
    </source>
</evidence>
<sequence length="556" mass="62765">MSKSIEKFPKELVSPIAQLHSLVEKNSKLHIKELFAAEQDRFQNYSVKFDQLVFDYSKHRITKSVLEQLFALAKTKQLTHWIERLFSQDKVNCTEQRAAMHWALRLPSEYSKFPELTKQVHTQLQRMYVLVEKIHAGQYRGATGEVIQDVVNIGVGGSDLGPQMVTHALCDFKVKTAKPLNVHFVSTMDGSQLSDLLHQLRPETTLFIISSKSFGTIDTLSNAQTVRQWLEKALGKHDRVVKSHFIGVSTKAEKMTEWGIAPENQLLLWDWVGGRYSLWSCIGFPIALTIGIDGFQQLLAGAHAVDEHFQNTNFEQNIPVLMALLGIWNNNFLNIQTHAVLPYDGRLKYFAAYLQQLEMESNGKSVQRDGQKVELDTCPIVWGEVGPNAQHAFYQLLHQGTQAVSCDFIAPIQRYNADHFTYVENAEALIEQHHLALSNCLAQSRLLAFGNEALDSAELKNLPIYKQYEGNQPSSTLLLKELNPYSLGMLIALYEHKVFVQSVIWNINPFDQWGVEKGKQIADQLLPILNGAQNDLSALDASTRGLIKILLGKVDG</sequence>
<accession>B0VMS2</accession>